<feature type="chain" id="PRO_0000100530" description="Phosphoribosylformylglycinamidine synthase subunit PurQ">
    <location>
        <begin position="1"/>
        <end position="227"/>
    </location>
</feature>
<feature type="domain" description="Glutamine amidotransferase type-1" evidence="1">
    <location>
        <begin position="3"/>
        <end position="227"/>
    </location>
</feature>
<feature type="active site" description="Nucleophile" evidence="1">
    <location>
        <position position="86"/>
    </location>
</feature>
<feature type="active site" evidence="1">
    <location>
        <position position="203"/>
    </location>
</feature>
<feature type="active site" evidence="1">
    <location>
        <position position="205"/>
    </location>
</feature>
<organism>
    <name type="scientific">Aquifex aeolicus (strain VF5)</name>
    <dbReference type="NCBI Taxonomy" id="224324"/>
    <lineage>
        <taxon>Bacteria</taxon>
        <taxon>Pseudomonadati</taxon>
        <taxon>Aquificota</taxon>
        <taxon>Aquificia</taxon>
        <taxon>Aquificales</taxon>
        <taxon>Aquificaceae</taxon>
        <taxon>Aquifex</taxon>
    </lineage>
</organism>
<comment type="function">
    <text evidence="1">Part of the phosphoribosylformylglycinamidine synthase complex involved in the purines biosynthetic pathway. Catalyzes the ATP-dependent conversion of formylglycinamide ribonucleotide (FGAR) and glutamine to yield formylglycinamidine ribonucleotide (FGAM) and glutamate. The FGAM synthase complex is composed of three subunits. PurQ produces an ammonia molecule by converting glutamine to glutamate. PurL transfers the ammonia molecule to FGAR to form FGAM in an ATP-dependent manner. PurS interacts with PurQ and PurL and is thought to assist in the transfer of the ammonia molecule from PurQ to PurL.</text>
</comment>
<comment type="catalytic activity">
    <reaction evidence="1">
        <text>N(2)-formyl-N(1)-(5-phospho-beta-D-ribosyl)glycinamide + L-glutamine + ATP + H2O = 2-formamido-N(1)-(5-O-phospho-beta-D-ribosyl)acetamidine + L-glutamate + ADP + phosphate + H(+)</text>
        <dbReference type="Rhea" id="RHEA:17129"/>
        <dbReference type="ChEBI" id="CHEBI:15377"/>
        <dbReference type="ChEBI" id="CHEBI:15378"/>
        <dbReference type="ChEBI" id="CHEBI:29985"/>
        <dbReference type="ChEBI" id="CHEBI:30616"/>
        <dbReference type="ChEBI" id="CHEBI:43474"/>
        <dbReference type="ChEBI" id="CHEBI:58359"/>
        <dbReference type="ChEBI" id="CHEBI:147286"/>
        <dbReference type="ChEBI" id="CHEBI:147287"/>
        <dbReference type="ChEBI" id="CHEBI:456216"/>
        <dbReference type="EC" id="6.3.5.3"/>
    </reaction>
</comment>
<comment type="catalytic activity">
    <reaction evidence="1">
        <text>L-glutamine + H2O = L-glutamate + NH4(+)</text>
        <dbReference type="Rhea" id="RHEA:15889"/>
        <dbReference type="ChEBI" id="CHEBI:15377"/>
        <dbReference type="ChEBI" id="CHEBI:28938"/>
        <dbReference type="ChEBI" id="CHEBI:29985"/>
        <dbReference type="ChEBI" id="CHEBI:58359"/>
        <dbReference type="EC" id="3.5.1.2"/>
    </reaction>
</comment>
<comment type="pathway">
    <text evidence="1">Purine metabolism; IMP biosynthesis via de novo pathway; 5-amino-1-(5-phospho-D-ribosyl)imidazole from N(2)-formyl-N(1)-(5-phospho-D-ribosyl)glycinamide: step 1/2.</text>
</comment>
<comment type="subunit">
    <text evidence="1">Part of the FGAM synthase complex composed of 1 PurL, 1 PurQ and 2 PurS subunits.</text>
</comment>
<comment type="subcellular location">
    <subcellularLocation>
        <location evidence="1">Cytoplasm</location>
    </subcellularLocation>
</comment>
<proteinExistence type="inferred from homology"/>
<dbReference type="EC" id="6.3.5.3" evidence="1"/>
<dbReference type="EC" id="3.5.1.2" evidence="1"/>
<dbReference type="EMBL" id="AE000657">
    <property type="protein sequence ID" value="AAC07146.1"/>
    <property type="molecule type" value="Genomic_DNA"/>
</dbReference>
<dbReference type="PIR" id="C70395">
    <property type="entry name" value="C70395"/>
</dbReference>
<dbReference type="RefSeq" id="NP_213753.1">
    <property type="nucleotide sequence ID" value="NC_000918.1"/>
</dbReference>
<dbReference type="RefSeq" id="WP_010880691.1">
    <property type="nucleotide sequence ID" value="NC_000918.1"/>
</dbReference>
<dbReference type="SMR" id="O67190"/>
<dbReference type="STRING" id="224324.aq_1105"/>
<dbReference type="EnsemblBacteria" id="AAC07146">
    <property type="protein sequence ID" value="AAC07146"/>
    <property type="gene ID" value="aq_1105"/>
</dbReference>
<dbReference type="KEGG" id="aae:aq_1105"/>
<dbReference type="PATRIC" id="fig|224324.8.peg.862"/>
<dbReference type="eggNOG" id="COG0047">
    <property type="taxonomic scope" value="Bacteria"/>
</dbReference>
<dbReference type="HOGENOM" id="CLU_001031_3_1_0"/>
<dbReference type="InParanoid" id="O67190"/>
<dbReference type="OrthoDB" id="9804441at2"/>
<dbReference type="UniPathway" id="UPA00074">
    <property type="reaction ID" value="UER00128"/>
</dbReference>
<dbReference type="Proteomes" id="UP000000798">
    <property type="component" value="Chromosome"/>
</dbReference>
<dbReference type="GO" id="GO:0005737">
    <property type="term" value="C:cytoplasm"/>
    <property type="evidence" value="ECO:0007669"/>
    <property type="project" value="UniProtKB-SubCell"/>
</dbReference>
<dbReference type="GO" id="GO:0005524">
    <property type="term" value="F:ATP binding"/>
    <property type="evidence" value="ECO:0007669"/>
    <property type="project" value="UniProtKB-KW"/>
</dbReference>
<dbReference type="GO" id="GO:0004359">
    <property type="term" value="F:glutaminase activity"/>
    <property type="evidence" value="ECO:0007669"/>
    <property type="project" value="UniProtKB-EC"/>
</dbReference>
<dbReference type="GO" id="GO:0004642">
    <property type="term" value="F:phosphoribosylformylglycinamidine synthase activity"/>
    <property type="evidence" value="ECO:0007669"/>
    <property type="project" value="UniProtKB-UniRule"/>
</dbReference>
<dbReference type="GO" id="GO:0006189">
    <property type="term" value="P:'de novo' IMP biosynthetic process"/>
    <property type="evidence" value="ECO:0007669"/>
    <property type="project" value="UniProtKB-UniRule"/>
</dbReference>
<dbReference type="CDD" id="cd01740">
    <property type="entry name" value="GATase1_FGAR_AT"/>
    <property type="match status" value="1"/>
</dbReference>
<dbReference type="Gene3D" id="3.40.50.880">
    <property type="match status" value="1"/>
</dbReference>
<dbReference type="HAMAP" id="MF_00421">
    <property type="entry name" value="PurQ"/>
    <property type="match status" value="1"/>
</dbReference>
<dbReference type="InterPro" id="IPR029062">
    <property type="entry name" value="Class_I_gatase-like"/>
</dbReference>
<dbReference type="InterPro" id="IPR010075">
    <property type="entry name" value="PRibForGlyAmidine_synth_PurQ"/>
</dbReference>
<dbReference type="NCBIfam" id="TIGR01737">
    <property type="entry name" value="FGAM_synth_I"/>
    <property type="match status" value="1"/>
</dbReference>
<dbReference type="NCBIfam" id="NF002957">
    <property type="entry name" value="PRK03619.1"/>
    <property type="match status" value="1"/>
</dbReference>
<dbReference type="PANTHER" id="PTHR47552">
    <property type="entry name" value="PHOSPHORIBOSYLFORMYLGLYCINAMIDINE SYNTHASE SUBUNIT PURQ"/>
    <property type="match status" value="1"/>
</dbReference>
<dbReference type="PANTHER" id="PTHR47552:SF1">
    <property type="entry name" value="PHOSPHORIBOSYLFORMYLGLYCINAMIDINE SYNTHASE SUBUNIT PURQ"/>
    <property type="match status" value="1"/>
</dbReference>
<dbReference type="Pfam" id="PF13507">
    <property type="entry name" value="GATase_5"/>
    <property type="match status" value="1"/>
</dbReference>
<dbReference type="PIRSF" id="PIRSF001586">
    <property type="entry name" value="FGAM_synth_I"/>
    <property type="match status" value="1"/>
</dbReference>
<dbReference type="SMART" id="SM01211">
    <property type="entry name" value="GATase_5"/>
    <property type="match status" value="1"/>
</dbReference>
<dbReference type="SUPFAM" id="SSF52317">
    <property type="entry name" value="Class I glutamine amidotransferase-like"/>
    <property type="match status" value="1"/>
</dbReference>
<dbReference type="PROSITE" id="PS51273">
    <property type="entry name" value="GATASE_TYPE_1"/>
    <property type="match status" value="1"/>
</dbReference>
<sequence>MKFAVCVFPGSNCDYDTYYVIRDILEKDVEFVYWEEKNLSKYDVVVLPGGFSFGDYLRPGALAARTPLAQAIYDFAQKGKYVIGICNGFQILTELGLLPGALLPNLNMRFVCKWVNLRVENERSAFTRKLEKGDVLRIPIAHHDGRYYVPEEELRKMEENGQILFRYCDEQGEVKEEVNPNGSVSNIAGVMNKEGNVFGMMPHPERASEDILGSHDGLMLWYSLLSD</sequence>
<gene>
    <name evidence="1" type="primary">purQ</name>
    <name type="ordered locus">aq_1105</name>
</gene>
<evidence type="ECO:0000255" key="1">
    <source>
        <dbReference type="HAMAP-Rule" id="MF_00421"/>
    </source>
</evidence>
<accession>O67190</accession>
<name>PURQ_AQUAE</name>
<reference key="1">
    <citation type="journal article" date="1998" name="Nature">
        <title>The complete genome of the hyperthermophilic bacterium Aquifex aeolicus.</title>
        <authorList>
            <person name="Deckert G."/>
            <person name="Warren P.V."/>
            <person name="Gaasterland T."/>
            <person name="Young W.G."/>
            <person name="Lenox A.L."/>
            <person name="Graham D.E."/>
            <person name="Overbeek R."/>
            <person name="Snead M.A."/>
            <person name="Keller M."/>
            <person name="Aujay M."/>
            <person name="Huber R."/>
            <person name="Feldman R.A."/>
            <person name="Short J.M."/>
            <person name="Olsen G.J."/>
            <person name="Swanson R.V."/>
        </authorList>
    </citation>
    <scope>NUCLEOTIDE SEQUENCE [LARGE SCALE GENOMIC DNA]</scope>
    <source>
        <strain>VF5</strain>
    </source>
</reference>
<protein>
    <recommendedName>
        <fullName evidence="1">Phosphoribosylformylglycinamidine synthase subunit PurQ</fullName>
        <shortName evidence="1">FGAM synthase</shortName>
        <ecNumber evidence="1">6.3.5.3</ecNumber>
    </recommendedName>
    <alternativeName>
        <fullName evidence="1">Formylglycinamide ribonucleotide amidotransferase subunit I</fullName>
        <shortName evidence="1">FGAR amidotransferase I</shortName>
        <shortName evidence="1">FGAR-AT I</shortName>
    </alternativeName>
    <alternativeName>
        <fullName evidence="1">Glutaminase PurQ</fullName>
        <ecNumber evidence="1">3.5.1.2</ecNumber>
    </alternativeName>
    <alternativeName>
        <fullName evidence="1">Phosphoribosylformylglycinamidine synthase subunit I</fullName>
    </alternativeName>
</protein>
<keyword id="KW-0067">ATP-binding</keyword>
<keyword id="KW-0963">Cytoplasm</keyword>
<keyword id="KW-0315">Glutamine amidotransferase</keyword>
<keyword id="KW-0378">Hydrolase</keyword>
<keyword id="KW-0436">Ligase</keyword>
<keyword id="KW-0547">Nucleotide-binding</keyword>
<keyword id="KW-0658">Purine biosynthesis</keyword>
<keyword id="KW-1185">Reference proteome</keyword>